<accession>C3N7P5</accession>
<gene>
    <name evidence="1" type="primary">rpl24e</name>
    <name type="ordered locus">YG5714_1983</name>
</gene>
<name>RL24E_SACI7</name>
<organism>
    <name type="scientific">Saccharolobus islandicus (strain Y.G.57.14 / Yellowstone #1)</name>
    <name type="common">Sulfolobus islandicus</name>
    <dbReference type="NCBI Taxonomy" id="439386"/>
    <lineage>
        <taxon>Archaea</taxon>
        <taxon>Thermoproteota</taxon>
        <taxon>Thermoprotei</taxon>
        <taxon>Sulfolobales</taxon>
        <taxon>Sulfolobaceae</taxon>
        <taxon>Saccharolobus</taxon>
    </lineage>
</organism>
<evidence type="ECO:0000255" key="1">
    <source>
        <dbReference type="HAMAP-Rule" id="MF_00773"/>
    </source>
</evidence>
<evidence type="ECO:0000305" key="2"/>
<proteinExistence type="inferred from homology"/>
<reference key="1">
    <citation type="journal article" date="2009" name="Proc. Natl. Acad. Sci. U.S.A.">
        <title>Biogeography of the Sulfolobus islandicus pan-genome.</title>
        <authorList>
            <person name="Reno M.L."/>
            <person name="Held N.L."/>
            <person name="Fields C.J."/>
            <person name="Burke P.V."/>
            <person name="Whitaker R.J."/>
        </authorList>
    </citation>
    <scope>NUCLEOTIDE SEQUENCE [LARGE SCALE GENOMIC DNA]</scope>
    <source>
        <strain>Y.G.57.14 / Yellowstone #1</strain>
    </source>
</reference>
<sequence>MPTTRQCSFCGHEIPPGTGLMYVRNDGTILWFCSSKCRKSMLKYHRDPKKYKWTTRYMKVR</sequence>
<dbReference type="EMBL" id="CP001403">
    <property type="protein sequence ID" value="ACP46239.1"/>
    <property type="molecule type" value="Genomic_DNA"/>
</dbReference>
<dbReference type="RefSeq" id="WP_009990483.1">
    <property type="nucleotide sequence ID" value="NC_012622.1"/>
</dbReference>
<dbReference type="SMR" id="C3N7P5"/>
<dbReference type="KEGG" id="siy:YG5714_1983"/>
<dbReference type="HOGENOM" id="CLU_190191_0_0_2"/>
<dbReference type="Proteomes" id="UP000002308">
    <property type="component" value="Chromosome"/>
</dbReference>
<dbReference type="GO" id="GO:1990904">
    <property type="term" value="C:ribonucleoprotein complex"/>
    <property type="evidence" value="ECO:0007669"/>
    <property type="project" value="UniProtKB-KW"/>
</dbReference>
<dbReference type="GO" id="GO:0005840">
    <property type="term" value="C:ribosome"/>
    <property type="evidence" value="ECO:0007669"/>
    <property type="project" value="UniProtKB-KW"/>
</dbReference>
<dbReference type="GO" id="GO:0019843">
    <property type="term" value="F:rRNA binding"/>
    <property type="evidence" value="ECO:0007669"/>
    <property type="project" value="UniProtKB-UniRule"/>
</dbReference>
<dbReference type="GO" id="GO:0003735">
    <property type="term" value="F:structural constituent of ribosome"/>
    <property type="evidence" value="ECO:0007669"/>
    <property type="project" value="InterPro"/>
</dbReference>
<dbReference type="GO" id="GO:0008270">
    <property type="term" value="F:zinc ion binding"/>
    <property type="evidence" value="ECO:0007669"/>
    <property type="project" value="UniProtKB-UniRule"/>
</dbReference>
<dbReference type="GO" id="GO:0006412">
    <property type="term" value="P:translation"/>
    <property type="evidence" value="ECO:0007669"/>
    <property type="project" value="UniProtKB-UniRule"/>
</dbReference>
<dbReference type="CDD" id="cd00472">
    <property type="entry name" value="Ribosomal_L24e_L24"/>
    <property type="match status" value="1"/>
</dbReference>
<dbReference type="FunFam" id="2.30.170.20:FF:000001">
    <property type="entry name" value="probable ribosome biogenesis protein RLP24"/>
    <property type="match status" value="1"/>
</dbReference>
<dbReference type="Gene3D" id="2.30.170.20">
    <property type="entry name" value="Ribosomal protein L24e"/>
    <property type="match status" value="1"/>
</dbReference>
<dbReference type="HAMAP" id="MF_00773">
    <property type="entry name" value="Ribosomal_eL24"/>
    <property type="match status" value="1"/>
</dbReference>
<dbReference type="InterPro" id="IPR038630">
    <property type="entry name" value="L24e/L24_sf"/>
</dbReference>
<dbReference type="InterPro" id="IPR056366">
    <property type="entry name" value="Ribosomal_eL24"/>
</dbReference>
<dbReference type="InterPro" id="IPR055345">
    <property type="entry name" value="Ribosomal_eL24-rel_arc"/>
</dbReference>
<dbReference type="InterPro" id="IPR000988">
    <property type="entry name" value="Ribosomal_eL24-rel_N"/>
</dbReference>
<dbReference type="InterPro" id="IPR023442">
    <property type="entry name" value="Ribosomal_eL24_CS"/>
</dbReference>
<dbReference type="InterPro" id="IPR011017">
    <property type="entry name" value="TRASH_dom"/>
</dbReference>
<dbReference type="NCBIfam" id="NF034186">
    <property type="entry name" value="PRK14891.1-1"/>
    <property type="match status" value="1"/>
</dbReference>
<dbReference type="PANTHER" id="PTHR10792">
    <property type="entry name" value="60S RIBOSOMAL PROTEIN L24"/>
    <property type="match status" value="1"/>
</dbReference>
<dbReference type="PANTHER" id="PTHR10792:SF1">
    <property type="entry name" value="RIBOSOMAL PROTEIN L24"/>
    <property type="match status" value="1"/>
</dbReference>
<dbReference type="Pfam" id="PF01246">
    <property type="entry name" value="Ribosomal_L24e"/>
    <property type="match status" value="1"/>
</dbReference>
<dbReference type="SMART" id="SM00746">
    <property type="entry name" value="TRASH"/>
    <property type="match status" value="1"/>
</dbReference>
<dbReference type="SUPFAM" id="SSF57716">
    <property type="entry name" value="Glucocorticoid receptor-like (DNA-binding domain)"/>
    <property type="match status" value="1"/>
</dbReference>
<dbReference type="PROSITE" id="PS01073">
    <property type="entry name" value="RIBOSOMAL_L24E"/>
    <property type="match status" value="1"/>
</dbReference>
<comment type="function">
    <text evidence="1">Binds to the 23S rRNA.</text>
</comment>
<comment type="cofactor">
    <cofactor evidence="1">
        <name>Zn(2+)</name>
        <dbReference type="ChEBI" id="CHEBI:29105"/>
    </cofactor>
    <text evidence="1">Binds 1 zinc ion per subunit.</text>
</comment>
<comment type="subunit">
    <text evidence="1">Part of the 50S ribosomal subunit. Forms a cluster with proteins L3 and L14.</text>
</comment>
<comment type="similarity">
    <text evidence="1">Belongs to the eukaryotic ribosomal protein eL24 family.</text>
</comment>
<feature type="chain" id="PRO_1000212914" description="Large ribosomal subunit protein eL24">
    <location>
        <begin position="1"/>
        <end position="61"/>
    </location>
</feature>
<feature type="zinc finger region" description="C4-type" evidence="1">
    <location>
        <begin position="7"/>
        <end position="37"/>
    </location>
</feature>
<feature type="binding site" evidence="1">
    <location>
        <position position="7"/>
    </location>
    <ligand>
        <name>Zn(2+)</name>
        <dbReference type="ChEBI" id="CHEBI:29105"/>
    </ligand>
</feature>
<feature type="binding site" evidence="1">
    <location>
        <position position="10"/>
    </location>
    <ligand>
        <name>Zn(2+)</name>
        <dbReference type="ChEBI" id="CHEBI:29105"/>
    </ligand>
</feature>
<feature type="binding site" evidence="1">
    <location>
        <position position="33"/>
    </location>
    <ligand>
        <name>Zn(2+)</name>
        <dbReference type="ChEBI" id="CHEBI:29105"/>
    </ligand>
</feature>
<feature type="binding site" evidence="1">
    <location>
        <position position="37"/>
    </location>
    <ligand>
        <name>Zn(2+)</name>
        <dbReference type="ChEBI" id="CHEBI:29105"/>
    </ligand>
</feature>
<keyword id="KW-0479">Metal-binding</keyword>
<keyword id="KW-0687">Ribonucleoprotein</keyword>
<keyword id="KW-0689">Ribosomal protein</keyword>
<keyword id="KW-0694">RNA-binding</keyword>
<keyword id="KW-0699">rRNA-binding</keyword>
<keyword id="KW-0862">Zinc</keyword>
<keyword id="KW-0863">Zinc-finger</keyword>
<protein>
    <recommendedName>
        <fullName evidence="1">Large ribosomal subunit protein eL24</fullName>
    </recommendedName>
    <alternativeName>
        <fullName evidence="2">50S ribosomal protein L24e</fullName>
    </alternativeName>
</protein>